<feature type="chain" id="PRO_0000235734" description="Ribonuclease HII">
    <location>
        <begin position="1"/>
        <end position="198"/>
    </location>
</feature>
<feature type="domain" description="RNase H type-2" evidence="2">
    <location>
        <begin position="11"/>
        <end position="198"/>
    </location>
</feature>
<feature type="binding site" evidence="1">
    <location>
        <position position="17"/>
    </location>
    <ligand>
        <name>a divalent metal cation</name>
        <dbReference type="ChEBI" id="CHEBI:60240"/>
    </ligand>
</feature>
<feature type="binding site" evidence="1">
    <location>
        <position position="18"/>
    </location>
    <ligand>
        <name>a divalent metal cation</name>
        <dbReference type="ChEBI" id="CHEBI:60240"/>
    </ligand>
</feature>
<feature type="binding site" evidence="1">
    <location>
        <position position="109"/>
    </location>
    <ligand>
        <name>a divalent metal cation</name>
        <dbReference type="ChEBI" id="CHEBI:60240"/>
    </ligand>
</feature>
<reference key="1">
    <citation type="journal article" date="2004" name="Nat. Biotechnol.">
        <title>The genome sequence of the capnophilic rumen bacterium Mannheimia succiniciproducens.</title>
        <authorList>
            <person name="Hong S.H."/>
            <person name="Kim J.S."/>
            <person name="Lee S.Y."/>
            <person name="In Y.H."/>
            <person name="Choi S.S."/>
            <person name="Rih J.-K."/>
            <person name="Kim C.H."/>
            <person name="Jeong H."/>
            <person name="Hur C.G."/>
            <person name="Kim J.J."/>
        </authorList>
    </citation>
    <scope>NUCLEOTIDE SEQUENCE [LARGE SCALE GENOMIC DNA]</scope>
    <source>
        <strain>KCTC 0769BP / MBEL55E</strain>
    </source>
</reference>
<proteinExistence type="inferred from homology"/>
<evidence type="ECO:0000255" key="1">
    <source>
        <dbReference type="HAMAP-Rule" id="MF_00052"/>
    </source>
</evidence>
<evidence type="ECO:0000255" key="2">
    <source>
        <dbReference type="PROSITE-ProRule" id="PRU01319"/>
    </source>
</evidence>
<keyword id="KW-0963">Cytoplasm</keyword>
<keyword id="KW-0255">Endonuclease</keyword>
<keyword id="KW-0378">Hydrolase</keyword>
<keyword id="KW-0464">Manganese</keyword>
<keyword id="KW-0479">Metal-binding</keyword>
<keyword id="KW-0540">Nuclease</keyword>
<protein>
    <recommendedName>
        <fullName evidence="1">Ribonuclease HII</fullName>
        <shortName evidence="1">RNase HII</shortName>
        <ecNumber evidence="1">3.1.26.4</ecNumber>
    </recommendedName>
</protein>
<accession>Q65VI0</accession>
<comment type="function">
    <text evidence="1">Endonuclease that specifically degrades the RNA of RNA-DNA hybrids.</text>
</comment>
<comment type="catalytic activity">
    <reaction evidence="1">
        <text>Endonucleolytic cleavage to 5'-phosphomonoester.</text>
        <dbReference type="EC" id="3.1.26.4"/>
    </reaction>
</comment>
<comment type="cofactor">
    <cofactor evidence="1">
        <name>Mn(2+)</name>
        <dbReference type="ChEBI" id="CHEBI:29035"/>
    </cofactor>
    <cofactor evidence="1">
        <name>Mg(2+)</name>
        <dbReference type="ChEBI" id="CHEBI:18420"/>
    </cofactor>
    <text evidence="1">Manganese or magnesium. Binds 1 divalent metal ion per monomer in the absence of substrate. May bind a second metal ion after substrate binding.</text>
</comment>
<comment type="subcellular location">
    <subcellularLocation>
        <location evidence="1">Cytoplasm</location>
    </subcellularLocation>
</comment>
<comment type="similarity">
    <text evidence="1">Belongs to the RNase HII family.</text>
</comment>
<sequence length="198" mass="21908">MAEFEYPQGFELIAGVDEVGRGPLVGAVVTAAVILDPNNPIDGLTDSKKLSEKKREKLAEEIKQKALAWALGRAEPEEIDALNILQATMLAMQRAIKNLKIQPHFVLIDGNRIPQLAIPAQAVVKGDSLVAEISAASIIAKVSRDHEMEVLDKQYPQYEFAKHKGYPTKVHLAKLAEFGVLPQHRRSFSPVRKLLENE</sequence>
<organism>
    <name type="scientific">Mannheimia succiniciproducens (strain KCTC 0769BP / MBEL55E)</name>
    <dbReference type="NCBI Taxonomy" id="221988"/>
    <lineage>
        <taxon>Bacteria</taxon>
        <taxon>Pseudomonadati</taxon>
        <taxon>Pseudomonadota</taxon>
        <taxon>Gammaproteobacteria</taxon>
        <taxon>Pasteurellales</taxon>
        <taxon>Pasteurellaceae</taxon>
        <taxon>Basfia</taxon>
    </lineage>
</organism>
<name>RNH2_MANSM</name>
<dbReference type="EC" id="3.1.26.4" evidence="1"/>
<dbReference type="EMBL" id="AE016827">
    <property type="protein sequence ID" value="AAU37030.1"/>
    <property type="molecule type" value="Genomic_DNA"/>
</dbReference>
<dbReference type="RefSeq" id="WP_011199605.1">
    <property type="nucleotide sequence ID" value="NC_006300.1"/>
</dbReference>
<dbReference type="SMR" id="Q65VI0"/>
<dbReference type="STRING" id="221988.MS0423"/>
<dbReference type="KEGG" id="msu:MS0423"/>
<dbReference type="eggNOG" id="COG0164">
    <property type="taxonomic scope" value="Bacteria"/>
</dbReference>
<dbReference type="HOGENOM" id="CLU_036532_3_2_6"/>
<dbReference type="OrthoDB" id="9803420at2"/>
<dbReference type="Proteomes" id="UP000000607">
    <property type="component" value="Chromosome"/>
</dbReference>
<dbReference type="GO" id="GO:0005737">
    <property type="term" value="C:cytoplasm"/>
    <property type="evidence" value="ECO:0007669"/>
    <property type="project" value="UniProtKB-SubCell"/>
</dbReference>
<dbReference type="GO" id="GO:0032299">
    <property type="term" value="C:ribonuclease H2 complex"/>
    <property type="evidence" value="ECO:0007669"/>
    <property type="project" value="TreeGrafter"/>
</dbReference>
<dbReference type="GO" id="GO:0030145">
    <property type="term" value="F:manganese ion binding"/>
    <property type="evidence" value="ECO:0007669"/>
    <property type="project" value="UniProtKB-UniRule"/>
</dbReference>
<dbReference type="GO" id="GO:0003723">
    <property type="term" value="F:RNA binding"/>
    <property type="evidence" value="ECO:0007669"/>
    <property type="project" value="InterPro"/>
</dbReference>
<dbReference type="GO" id="GO:0004523">
    <property type="term" value="F:RNA-DNA hybrid ribonuclease activity"/>
    <property type="evidence" value="ECO:0007669"/>
    <property type="project" value="UniProtKB-UniRule"/>
</dbReference>
<dbReference type="GO" id="GO:0043137">
    <property type="term" value="P:DNA replication, removal of RNA primer"/>
    <property type="evidence" value="ECO:0007669"/>
    <property type="project" value="TreeGrafter"/>
</dbReference>
<dbReference type="GO" id="GO:0006298">
    <property type="term" value="P:mismatch repair"/>
    <property type="evidence" value="ECO:0007669"/>
    <property type="project" value="TreeGrafter"/>
</dbReference>
<dbReference type="CDD" id="cd07182">
    <property type="entry name" value="RNase_HII_bacteria_HII_like"/>
    <property type="match status" value="1"/>
</dbReference>
<dbReference type="FunFam" id="3.30.420.10:FF:000006">
    <property type="entry name" value="Ribonuclease HII"/>
    <property type="match status" value="1"/>
</dbReference>
<dbReference type="Gene3D" id="3.30.420.10">
    <property type="entry name" value="Ribonuclease H-like superfamily/Ribonuclease H"/>
    <property type="match status" value="1"/>
</dbReference>
<dbReference type="HAMAP" id="MF_00052_B">
    <property type="entry name" value="RNase_HII_B"/>
    <property type="match status" value="1"/>
</dbReference>
<dbReference type="InterPro" id="IPR022898">
    <property type="entry name" value="RNase_HII"/>
</dbReference>
<dbReference type="InterPro" id="IPR001352">
    <property type="entry name" value="RNase_HII/HIII"/>
</dbReference>
<dbReference type="InterPro" id="IPR024567">
    <property type="entry name" value="RNase_HII/HIII_dom"/>
</dbReference>
<dbReference type="InterPro" id="IPR012337">
    <property type="entry name" value="RNaseH-like_sf"/>
</dbReference>
<dbReference type="InterPro" id="IPR036397">
    <property type="entry name" value="RNaseH_sf"/>
</dbReference>
<dbReference type="NCBIfam" id="NF000594">
    <property type="entry name" value="PRK00015.1-1"/>
    <property type="match status" value="1"/>
</dbReference>
<dbReference type="NCBIfam" id="NF000595">
    <property type="entry name" value="PRK00015.1-3"/>
    <property type="match status" value="1"/>
</dbReference>
<dbReference type="NCBIfam" id="NF000596">
    <property type="entry name" value="PRK00015.1-4"/>
    <property type="match status" value="1"/>
</dbReference>
<dbReference type="PANTHER" id="PTHR10954">
    <property type="entry name" value="RIBONUCLEASE H2 SUBUNIT A"/>
    <property type="match status" value="1"/>
</dbReference>
<dbReference type="PANTHER" id="PTHR10954:SF18">
    <property type="entry name" value="RIBONUCLEASE HII"/>
    <property type="match status" value="1"/>
</dbReference>
<dbReference type="Pfam" id="PF01351">
    <property type="entry name" value="RNase_HII"/>
    <property type="match status" value="1"/>
</dbReference>
<dbReference type="SUPFAM" id="SSF53098">
    <property type="entry name" value="Ribonuclease H-like"/>
    <property type="match status" value="1"/>
</dbReference>
<dbReference type="PROSITE" id="PS51975">
    <property type="entry name" value="RNASE_H_2"/>
    <property type="match status" value="1"/>
</dbReference>
<gene>
    <name evidence="1" type="primary">rnhB</name>
    <name type="ordered locus">MS0423</name>
</gene>